<proteinExistence type="inferred from homology"/>
<sequence length="638" mass="69110">MGKIIGIDLGTTNSCVAIMDGTTARVLENAEGDRTTPSIIAYTQDGETLVGQPAKRQAVTNPQNTLFAIKRLIGRRFQDEEVQRDVSIMPYKIIGADNGDAWLDVKGQKMAPPQISAEVLKKMKKTAEDYLGEPVTEAVITVPAYFNDAQRQATKDAGRIAGLEVKRIINEPTAAALAYGLDKEVGNRTIAVYDLGGGTFDISIIEIDEVDGEKTFEVLATNGDTHLGGEDFDSRMINYLVEEFKKDQGIDLRNDPLAMQRLKEAAEKAKIELSSAQQTDVNLPYITADATGPKHMNIKVTRAKLESLVEDLVNRSIEPLKVALQDAGLSVSDINDVILVGGQTRMPMVQKKVAEFFGKEPRKDVNPDEAVAIGAAVQGGVLTGDVKDVLLLDVTPLSLGIETMGGVMTALISKNTTIPTKHSQVFSTAEDNQSAVTIHVLQGERKRASDNKSLGQFNLDGINPAPRGMPQIEVTFDIDADGILHVSAKDKNSGKEQKITIKASSGLNEDEIQKMVRDAEANAESDRKFEELVQTRNQGDHLLHSTRKQVEEAGDQLPADDKTAIESALSALETALKGEDKAAIEAKMQELAQASQKLMEIAQQQHAQQQAGGADASANNAKDDDVVDAEFEEVKDKK</sequence>
<organism>
    <name type="scientific">Citrobacter koseri (strain ATCC BAA-895 / CDC 4225-83 / SGSC4696)</name>
    <dbReference type="NCBI Taxonomy" id="290338"/>
    <lineage>
        <taxon>Bacteria</taxon>
        <taxon>Pseudomonadati</taxon>
        <taxon>Pseudomonadota</taxon>
        <taxon>Gammaproteobacteria</taxon>
        <taxon>Enterobacterales</taxon>
        <taxon>Enterobacteriaceae</taxon>
        <taxon>Citrobacter</taxon>
    </lineage>
</organism>
<protein>
    <recommendedName>
        <fullName evidence="1">Chaperone protein DnaK</fullName>
    </recommendedName>
    <alternativeName>
        <fullName evidence="1">HSP70</fullName>
    </alternativeName>
    <alternativeName>
        <fullName evidence="1">Heat shock 70 kDa protein</fullName>
    </alternativeName>
    <alternativeName>
        <fullName evidence="1">Heat shock protein 70</fullName>
    </alternativeName>
</protein>
<reference key="1">
    <citation type="submission" date="2007-08" db="EMBL/GenBank/DDBJ databases">
        <authorList>
            <consortium name="The Citrobacter koseri Genome Sequencing Project"/>
            <person name="McClelland M."/>
            <person name="Sanderson E.K."/>
            <person name="Porwollik S."/>
            <person name="Spieth J."/>
            <person name="Clifton W.S."/>
            <person name="Latreille P."/>
            <person name="Courtney L."/>
            <person name="Wang C."/>
            <person name="Pepin K."/>
            <person name="Bhonagiri V."/>
            <person name="Nash W."/>
            <person name="Johnson M."/>
            <person name="Thiruvilangam P."/>
            <person name="Wilson R."/>
        </authorList>
    </citation>
    <scope>NUCLEOTIDE SEQUENCE [LARGE SCALE GENOMIC DNA]</scope>
    <source>
        <strain>ATCC BAA-895 / CDC 4225-83 / SGSC4696</strain>
    </source>
</reference>
<name>DNAK_CITK8</name>
<gene>
    <name evidence="1" type="primary">dnaK</name>
    <name type="ordered locus">CKO_03373</name>
</gene>
<feature type="chain" id="PRO_1000059537" description="Chaperone protein DnaK">
    <location>
        <begin position="1"/>
        <end position="638"/>
    </location>
</feature>
<feature type="region of interest" description="Disordered" evidence="2">
    <location>
        <begin position="602"/>
        <end position="638"/>
    </location>
</feature>
<feature type="compositionally biased region" description="Low complexity" evidence="2">
    <location>
        <begin position="602"/>
        <end position="620"/>
    </location>
</feature>
<feature type="modified residue" description="Phosphothreonine; by autocatalysis" evidence="1">
    <location>
        <position position="199"/>
    </location>
</feature>
<evidence type="ECO:0000255" key="1">
    <source>
        <dbReference type="HAMAP-Rule" id="MF_00332"/>
    </source>
</evidence>
<evidence type="ECO:0000256" key="2">
    <source>
        <dbReference type="SAM" id="MobiDB-lite"/>
    </source>
</evidence>
<accession>A8ALU3</accession>
<comment type="function">
    <text evidence="1">Acts as a chaperone.</text>
</comment>
<comment type="induction">
    <text evidence="1">By stress conditions e.g. heat shock.</text>
</comment>
<comment type="similarity">
    <text evidence="1">Belongs to the heat shock protein 70 family.</text>
</comment>
<keyword id="KW-0067">ATP-binding</keyword>
<keyword id="KW-0143">Chaperone</keyword>
<keyword id="KW-0547">Nucleotide-binding</keyword>
<keyword id="KW-0597">Phosphoprotein</keyword>
<keyword id="KW-1185">Reference proteome</keyword>
<keyword id="KW-0346">Stress response</keyword>
<dbReference type="EMBL" id="CP000822">
    <property type="protein sequence ID" value="ABV14456.1"/>
    <property type="molecule type" value="Genomic_DNA"/>
</dbReference>
<dbReference type="RefSeq" id="WP_012134158.1">
    <property type="nucleotide sequence ID" value="NC_009792.1"/>
</dbReference>
<dbReference type="BMRB" id="A8ALU3"/>
<dbReference type="SMR" id="A8ALU3"/>
<dbReference type="STRING" id="290338.CKO_03373"/>
<dbReference type="GeneID" id="45137133"/>
<dbReference type="KEGG" id="cko:CKO_03373"/>
<dbReference type="HOGENOM" id="CLU_005965_2_1_6"/>
<dbReference type="OrthoDB" id="9766019at2"/>
<dbReference type="Proteomes" id="UP000008148">
    <property type="component" value="Chromosome"/>
</dbReference>
<dbReference type="GO" id="GO:0005524">
    <property type="term" value="F:ATP binding"/>
    <property type="evidence" value="ECO:0007669"/>
    <property type="project" value="UniProtKB-UniRule"/>
</dbReference>
<dbReference type="GO" id="GO:0140662">
    <property type="term" value="F:ATP-dependent protein folding chaperone"/>
    <property type="evidence" value="ECO:0007669"/>
    <property type="project" value="InterPro"/>
</dbReference>
<dbReference type="GO" id="GO:0051082">
    <property type="term" value="F:unfolded protein binding"/>
    <property type="evidence" value="ECO:0007669"/>
    <property type="project" value="InterPro"/>
</dbReference>
<dbReference type="CDD" id="cd10234">
    <property type="entry name" value="ASKHA_NBD_HSP70_DnaK-like"/>
    <property type="match status" value="1"/>
</dbReference>
<dbReference type="FunFam" id="2.60.34.10:FF:000014">
    <property type="entry name" value="Chaperone protein DnaK HSP70"/>
    <property type="match status" value="1"/>
</dbReference>
<dbReference type="FunFam" id="3.30.30.30:FF:000003">
    <property type="entry name" value="Heat shock protein 9"/>
    <property type="match status" value="1"/>
</dbReference>
<dbReference type="FunFam" id="1.20.1270.10:FF:000001">
    <property type="entry name" value="Molecular chaperone DnaK"/>
    <property type="match status" value="1"/>
</dbReference>
<dbReference type="FunFam" id="3.30.420.40:FF:000004">
    <property type="entry name" value="Molecular chaperone DnaK"/>
    <property type="match status" value="1"/>
</dbReference>
<dbReference type="FunFam" id="3.90.640.10:FF:000003">
    <property type="entry name" value="Molecular chaperone DnaK"/>
    <property type="match status" value="1"/>
</dbReference>
<dbReference type="Gene3D" id="1.20.1270.10">
    <property type="match status" value="1"/>
</dbReference>
<dbReference type="Gene3D" id="3.30.420.40">
    <property type="match status" value="2"/>
</dbReference>
<dbReference type="Gene3D" id="3.90.640.10">
    <property type="entry name" value="Actin, Chain A, domain 4"/>
    <property type="match status" value="1"/>
</dbReference>
<dbReference type="Gene3D" id="2.60.34.10">
    <property type="entry name" value="Substrate Binding Domain Of DNAk, Chain A, domain 1"/>
    <property type="match status" value="1"/>
</dbReference>
<dbReference type="HAMAP" id="MF_00332">
    <property type="entry name" value="DnaK"/>
    <property type="match status" value="1"/>
</dbReference>
<dbReference type="InterPro" id="IPR043129">
    <property type="entry name" value="ATPase_NBD"/>
</dbReference>
<dbReference type="InterPro" id="IPR012725">
    <property type="entry name" value="Chaperone_DnaK"/>
</dbReference>
<dbReference type="InterPro" id="IPR018181">
    <property type="entry name" value="Heat_shock_70_CS"/>
</dbReference>
<dbReference type="InterPro" id="IPR029048">
    <property type="entry name" value="HSP70_C_sf"/>
</dbReference>
<dbReference type="InterPro" id="IPR029047">
    <property type="entry name" value="HSP70_peptide-bd_sf"/>
</dbReference>
<dbReference type="InterPro" id="IPR013126">
    <property type="entry name" value="Hsp_70_fam"/>
</dbReference>
<dbReference type="NCBIfam" id="NF001413">
    <property type="entry name" value="PRK00290.1"/>
    <property type="match status" value="1"/>
</dbReference>
<dbReference type="NCBIfam" id="NF003520">
    <property type="entry name" value="PRK05183.1"/>
    <property type="match status" value="1"/>
</dbReference>
<dbReference type="NCBIfam" id="TIGR02350">
    <property type="entry name" value="prok_dnaK"/>
    <property type="match status" value="1"/>
</dbReference>
<dbReference type="PANTHER" id="PTHR19375">
    <property type="entry name" value="HEAT SHOCK PROTEIN 70KDA"/>
    <property type="match status" value="1"/>
</dbReference>
<dbReference type="Pfam" id="PF00012">
    <property type="entry name" value="HSP70"/>
    <property type="match status" value="1"/>
</dbReference>
<dbReference type="PRINTS" id="PR00301">
    <property type="entry name" value="HEATSHOCK70"/>
</dbReference>
<dbReference type="SUPFAM" id="SSF53067">
    <property type="entry name" value="Actin-like ATPase domain"/>
    <property type="match status" value="2"/>
</dbReference>
<dbReference type="SUPFAM" id="SSF100934">
    <property type="entry name" value="Heat shock protein 70kD (HSP70), C-terminal subdomain"/>
    <property type="match status" value="1"/>
</dbReference>
<dbReference type="SUPFAM" id="SSF100920">
    <property type="entry name" value="Heat shock protein 70kD (HSP70), peptide-binding domain"/>
    <property type="match status" value="1"/>
</dbReference>
<dbReference type="PROSITE" id="PS00297">
    <property type="entry name" value="HSP70_1"/>
    <property type="match status" value="1"/>
</dbReference>
<dbReference type="PROSITE" id="PS00329">
    <property type="entry name" value="HSP70_2"/>
    <property type="match status" value="1"/>
</dbReference>
<dbReference type="PROSITE" id="PS01036">
    <property type="entry name" value="HSP70_3"/>
    <property type="match status" value="1"/>
</dbReference>